<proteinExistence type="inferred from homology"/>
<sequence length="454" mass="48143">MSDFVDEAVLHLKAGDGGHGCVSIHREKFKPLGGPDGGNGGHGGDVILEVDRNTATLLEYQRRPHRKAENGAPGQGSNRSGASGADLVLPVPDGTVVTTLDGEVIADLVGHGTRLVVARGGRGGLGNAALASPKRKAPGFALKGEPGEKVDIRLELKTIADVGLVGFPSAGKSSLIAAMSAARPKIADYPFTTLVPNLGVVEAGQTQYVVADVPGLIPGASEGKGLGLEFLRHVERCSTLLHVLDCATYEPGRDPISDLEAVERELAVYGERTGVDLSDRPRLVALNKIDVPEARELAELVEPMLVERGYRVLQVSAATREGLKELAYALGEQVAAARAARPPEEPTRLILRPREIGEIPFQVIPLGNNVFRVIGDKPTRWVRQTDFSNDEAVGYLADRLNRLGIEEALAEAGATAGAEVHIGDEDNPVVFDWDPTVDSEQTVLGPRGTDPRLS</sequence>
<keyword id="KW-0963">Cytoplasm</keyword>
<keyword id="KW-0342">GTP-binding</keyword>
<keyword id="KW-0378">Hydrolase</keyword>
<keyword id="KW-0460">Magnesium</keyword>
<keyword id="KW-0479">Metal-binding</keyword>
<keyword id="KW-0547">Nucleotide-binding</keyword>
<reference key="1">
    <citation type="journal article" date="2007" name="J. Bacteriol.">
        <title>Genome sequence and analysis of the soil cellulolytic actinomycete Thermobifida fusca YX.</title>
        <authorList>
            <person name="Lykidis A."/>
            <person name="Mavromatis K."/>
            <person name="Ivanova N."/>
            <person name="Anderson I."/>
            <person name="Land M."/>
            <person name="DiBartolo G."/>
            <person name="Martinez M."/>
            <person name="Lapidus A."/>
            <person name="Lucas S."/>
            <person name="Copeland A."/>
            <person name="Richardson P."/>
            <person name="Wilson D.B."/>
            <person name="Kyrpides N."/>
        </authorList>
    </citation>
    <scope>NUCLEOTIDE SEQUENCE [LARGE SCALE GENOMIC DNA]</scope>
    <source>
        <strain>YX</strain>
    </source>
</reference>
<feature type="chain" id="PRO_0000386349" description="GTPase Obg">
    <location>
        <begin position="1"/>
        <end position="454"/>
    </location>
</feature>
<feature type="domain" description="Obg" evidence="3">
    <location>
        <begin position="2"/>
        <end position="159"/>
    </location>
</feature>
<feature type="domain" description="OBG-type G" evidence="1">
    <location>
        <begin position="160"/>
        <end position="335"/>
    </location>
</feature>
<feature type="domain" description="OCT" evidence="2">
    <location>
        <begin position="353"/>
        <end position="435"/>
    </location>
</feature>
<feature type="region of interest" description="Disordered" evidence="4">
    <location>
        <begin position="60"/>
        <end position="87"/>
    </location>
</feature>
<feature type="binding site" evidence="1">
    <location>
        <begin position="166"/>
        <end position="173"/>
    </location>
    <ligand>
        <name>GTP</name>
        <dbReference type="ChEBI" id="CHEBI:37565"/>
    </ligand>
</feature>
<feature type="binding site" evidence="1">
    <location>
        <position position="173"/>
    </location>
    <ligand>
        <name>Mg(2+)</name>
        <dbReference type="ChEBI" id="CHEBI:18420"/>
    </ligand>
</feature>
<feature type="binding site" evidence="1">
    <location>
        <begin position="191"/>
        <end position="195"/>
    </location>
    <ligand>
        <name>GTP</name>
        <dbReference type="ChEBI" id="CHEBI:37565"/>
    </ligand>
</feature>
<feature type="binding site" evidence="1">
    <location>
        <position position="193"/>
    </location>
    <ligand>
        <name>Mg(2+)</name>
        <dbReference type="ChEBI" id="CHEBI:18420"/>
    </ligand>
</feature>
<feature type="binding site" evidence="1">
    <location>
        <begin position="212"/>
        <end position="215"/>
    </location>
    <ligand>
        <name>GTP</name>
        <dbReference type="ChEBI" id="CHEBI:37565"/>
    </ligand>
</feature>
<feature type="binding site" evidence="1">
    <location>
        <begin position="287"/>
        <end position="290"/>
    </location>
    <ligand>
        <name>GTP</name>
        <dbReference type="ChEBI" id="CHEBI:37565"/>
    </ligand>
</feature>
<feature type="binding site" evidence="1">
    <location>
        <begin position="316"/>
        <end position="318"/>
    </location>
    <ligand>
        <name>GTP</name>
        <dbReference type="ChEBI" id="CHEBI:37565"/>
    </ligand>
</feature>
<evidence type="ECO:0000255" key="1">
    <source>
        <dbReference type="HAMAP-Rule" id="MF_01454"/>
    </source>
</evidence>
<evidence type="ECO:0000255" key="2">
    <source>
        <dbReference type="PROSITE-ProRule" id="PRU01229"/>
    </source>
</evidence>
<evidence type="ECO:0000255" key="3">
    <source>
        <dbReference type="PROSITE-ProRule" id="PRU01231"/>
    </source>
</evidence>
<evidence type="ECO:0000256" key="4">
    <source>
        <dbReference type="SAM" id="MobiDB-lite"/>
    </source>
</evidence>
<name>OBG_THEFY</name>
<comment type="function">
    <text evidence="1">An essential GTPase which binds GTP, GDP and possibly (p)ppGpp with moderate affinity, with high nucleotide exchange rates and a fairly low GTP hydrolysis rate. Plays a role in control of the cell cycle, stress response, ribosome biogenesis and in those bacteria that undergo differentiation, in morphogenesis control.</text>
</comment>
<comment type="cofactor">
    <cofactor evidence="1">
        <name>Mg(2+)</name>
        <dbReference type="ChEBI" id="CHEBI:18420"/>
    </cofactor>
</comment>
<comment type="subunit">
    <text evidence="1">Monomer.</text>
</comment>
<comment type="subcellular location">
    <subcellularLocation>
        <location evidence="1">Cytoplasm</location>
    </subcellularLocation>
</comment>
<comment type="similarity">
    <text evidence="1">Belongs to the TRAFAC class OBG-HflX-like GTPase superfamily. OBG GTPase family.</text>
</comment>
<organism>
    <name type="scientific">Thermobifida fusca (strain YX)</name>
    <dbReference type="NCBI Taxonomy" id="269800"/>
    <lineage>
        <taxon>Bacteria</taxon>
        <taxon>Bacillati</taxon>
        <taxon>Actinomycetota</taxon>
        <taxon>Actinomycetes</taxon>
        <taxon>Streptosporangiales</taxon>
        <taxon>Nocardiopsidaceae</taxon>
        <taxon>Thermobifida</taxon>
    </lineage>
</organism>
<gene>
    <name evidence="1" type="primary">obg</name>
    <name type="ordered locus">Tfu_2180</name>
</gene>
<accession>Q47MV6</accession>
<protein>
    <recommendedName>
        <fullName evidence="1">GTPase Obg</fullName>
        <ecNumber evidence="1">3.6.5.-</ecNumber>
    </recommendedName>
    <alternativeName>
        <fullName evidence="1">GTP-binding protein Obg</fullName>
    </alternativeName>
</protein>
<dbReference type="EC" id="3.6.5.-" evidence="1"/>
<dbReference type="EMBL" id="CP000088">
    <property type="protein sequence ID" value="AAZ56213.1"/>
    <property type="molecule type" value="Genomic_DNA"/>
</dbReference>
<dbReference type="SMR" id="Q47MV6"/>
<dbReference type="STRING" id="269800.Tfu_2180"/>
<dbReference type="KEGG" id="tfu:Tfu_2180"/>
<dbReference type="eggNOG" id="COG0536">
    <property type="taxonomic scope" value="Bacteria"/>
</dbReference>
<dbReference type="HOGENOM" id="CLU_011747_1_3_11"/>
<dbReference type="OrthoDB" id="9807318at2"/>
<dbReference type="GO" id="GO:0005737">
    <property type="term" value="C:cytoplasm"/>
    <property type="evidence" value="ECO:0007669"/>
    <property type="project" value="UniProtKB-SubCell"/>
</dbReference>
<dbReference type="GO" id="GO:0005525">
    <property type="term" value="F:GTP binding"/>
    <property type="evidence" value="ECO:0007669"/>
    <property type="project" value="UniProtKB-UniRule"/>
</dbReference>
<dbReference type="GO" id="GO:0003924">
    <property type="term" value="F:GTPase activity"/>
    <property type="evidence" value="ECO:0007669"/>
    <property type="project" value="UniProtKB-UniRule"/>
</dbReference>
<dbReference type="GO" id="GO:0000287">
    <property type="term" value="F:magnesium ion binding"/>
    <property type="evidence" value="ECO:0007669"/>
    <property type="project" value="InterPro"/>
</dbReference>
<dbReference type="GO" id="GO:0042254">
    <property type="term" value="P:ribosome biogenesis"/>
    <property type="evidence" value="ECO:0007669"/>
    <property type="project" value="UniProtKB-UniRule"/>
</dbReference>
<dbReference type="CDD" id="cd01898">
    <property type="entry name" value="Obg"/>
    <property type="match status" value="1"/>
</dbReference>
<dbReference type="FunFam" id="2.70.210.12:FF:000001">
    <property type="entry name" value="GTPase Obg"/>
    <property type="match status" value="1"/>
</dbReference>
<dbReference type="Gene3D" id="3.30.300.350">
    <property type="entry name" value="GTP-binding protein OBG, C-terminal domain"/>
    <property type="match status" value="1"/>
</dbReference>
<dbReference type="Gene3D" id="2.70.210.12">
    <property type="entry name" value="GTP1/OBG domain"/>
    <property type="match status" value="1"/>
</dbReference>
<dbReference type="Gene3D" id="3.40.50.300">
    <property type="entry name" value="P-loop containing nucleotide triphosphate hydrolases"/>
    <property type="match status" value="1"/>
</dbReference>
<dbReference type="HAMAP" id="MF_01454">
    <property type="entry name" value="GTPase_Obg"/>
    <property type="match status" value="1"/>
</dbReference>
<dbReference type="InterPro" id="IPR031167">
    <property type="entry name" value="G_OBG"/>
</dbReference>
<dbReference type="InterPro" id="IPR006073">
    <property type="entry name" value="GTP-bd"/>
</dbReference>
<dbReference type="InterPro" id="IPR014100">
    <property type="entry name" value="GTP-bd_Obg/CgtA"/>
</dbReference>
<dbReference type="InterPro" id="IPR036346">
    <property type="entry name" value="GTP-bd_prot_GTP1/OBG_C_sf"/>
</dbReference>
<dbReference type="InterPro" id="IPR006074">
    <property type="entry name" value="GTP1-OBG_CS"/>
</dbReference>
<dbReference type="InterPro" id="IPR006169">
    <property type="entry name" value="GTP1_OBG_dom"/>
</dbReference>
<dbReference type="InterPro" id="IPR036726">
    <property type="entry name" value="GTP1_OBG_dom_sf"/>
</dbReference>
<dbReference type="InterPro" id="IPR045086">
    <property type="entry name" value="OBG_GTPase"/>
</dbReference>
<dbReference type="InterPro" id="IPR015349">
    <property type="entry name" value="OCT_dom"/>
</dbReference>
<dbReference type="InterPro" id="IPR027417">
    <property type="entry name" value="P-loop_NTPase"/>
</dbReference>
<dbReference type="NCBIfam" id="TIGR02729">
    <property type="entry name" value="Obg_CgtA"/>
    <property type="match status" value="1"/>
</dbReference>
<dbReference type="NCBIfam" id="TIGR03595">
    <property type="entry name" value="Obg_CgtA_exten"/>
    <property type="match status" value="1"/>
</dbReference>
<dbReference type="NCBIfam" id="NF008954">
    <property type="entry name" value="PRK12296.1"/>
    <property type="match status" value="1"/>
</dbReference>
<dbReference type="NCBIfam" id="NF008955">
    <property type="entry name" value="PRK12297.1"/>
    <property type="match status" value="1"/>
</dbReference>
<dbReference type="NCBIfam" id="NF008956">
    <property type="entry name" value="PRK12299.1"/>
    <property type="match status" value="1"/>
</dbReference>
<dbReference type="PANTHER" id="PTHR11702">
    <property type="entry name" value="DEVELOPMENTALLY REGULATED GTP-BINDING PROTEIN-RELATED"/>
    <property type="match status" value="1"/>
</dbReference>
<dbReference type="PANTHER" id="PTHR11702:SF31">
    <property type="entry name" value="MITOCHONDRIAL RIBOSOME-ASSOCIATED GTPASE 2"/>
    <property type="match status" value="1"/>
</dbReference>
<dbReference type="Pfam" id="PF09269">
    <property type="entry name" value="DUF1967"/>
    <property type="match status" value="1"/>
</dbReference>
<dbReference type="Pfam" id="PF01018">
    <property type="entry name" value="GTP1_OBG"/>
    <property type="match status" value="1"/>
</dbReference>
<dbReference type="Pfam" id="PF01926">
    <property type="entry name" value="MMR_HSR1"/>
    <property type="match status" value="1"/>
</dbReference>
<dbReference type="PRINTS" id="PR00326">
    <property type="entry name" value="GTP1OBG"/>
</dbReference>
<dbReference type="SUPFAM" id="SSF102741">
    <property type="entry name" value="Obg GTP-binding protein C-terminal domain"/>
    <property type="match status" value="1"/>
</dbReference>
<dbReference type="SUPFAM" id="SSF82051">
    <property type="entry name" value="Obg GTP-binding protein N-terminal domain"/>
    <property type="match status" value="1"/>
</dbReference>
<dbReference type="SUPFAM" id="SSF52540">
    <property type="entry name" value="P-loop containing nucleoside triphosphate hydrolases"/>
    <property type="match status" value="1"/>
</dbReference>
<dbReference type="PROSITE" id="PS51710">
    <property type="entry name" value="G_OBG"/>
    <property type="match status" value="1"/>
</dbReference>
<dbReference type="PROSITE" id="PS00905">
    <property type="entry name" value="GTP1_OBG"/>
    <property type="match status" value="1"/>
</dbReference>
<dbReference type="PROSITE" id="PS51883">
    <property type="entry name" value="OBG"/>
    <property type="match status" value="1"/>
</dbReference>
<dbReference type="PROSITE" id="PS51881">
    <property type="entry name" value="OCT"/>
    <property type="match status" value="1"/>
</dbReference>